<gene>
    <name evidence="3" type="primary">algE2</name>
</gene>
<proteinExistence type="evidence at protein level"/>
<keyword id="KW-0016">Alginate biosynthesis</keyword>
<keyword id="KW-0106">Calcium</keyword>
<keyword id="KW-0903">Direct protein sequencing</keyword>
<keyword id="KW-0413">Isomerase</keyword>
<keyword id="KW-0677">Repeat</keyword>
<keyword id="KW-0964">Secreted</keyword>
<feature type="chain" id="PRO_0000219556" description="Mannuronan C5-epimerase AlgE2">
    <location>
        <begin position="1"/>
        <end position="997"/>
    </location>
</feature>
<feature type="repeat" description="PbH1 1" evidence="1">
    <location>
        <begin position="133"/>
        <end position="155"/>
    </location>
</feature>
<feature type="repeat" description="PbH1 2" evidence="1">
    <location>
        <begin position="157"/>
        <end position="179"/>
    </location>
</feature>
<feature type="repeat" description="PbH1 3" evidence="1">
    <location>
        <begin position="180"/>
        <end position="202"/>
    </location>
</feature>
<feature type="repeat" description="PbH1 4" evidence="1">
    <location>
        <begin position="204"/>
        <end position="226"/>
    </location>
</feature>
<feature type="repeat" description="PbH1 5" evidence="1">
    <location>
        <begin position="257"/>
        <end position="279"/>
    </location>
</feature>
<feature type="repeat" description="PbH1 6" evidence="1">
    <location>
        <begin position="280"/>
        <end position="315"/>
    </location>
</feature>
<feature type="repeat" description="PbH1 7" evidence="1">
    <location>
        <begin position="320"/>
        <end position="359"/>
    </location>
</feature>
<feature type="repeat" description="Hemolysin-type calcium-binding 1" evidence="1">
    <location>
        <begin position="388"/>
        <end position="403"/>
    </location>
</feature>
<feature type="repeat" description="Hemolysin-type calcium-binding 2" evidence="1">
    <location>
        <begin position="406"/>
        <end position="422"/>
    </location>
</feature>
<feature type="repeat" description="Hemolysin-type calcium-binding 3" evidence="1">
    <location>
        <begin position="424"/>
        <end position="439"/>
    </location>
</feature>
<feature type="repeat" description="Hemolysin-type calcium-binding 4" evidence="1">
    <location>
        <begin position="557"/>
        <end position="573"/>
    </location>
</feature>
<feature type="repeat" description="Hemolysin-type calcium-binding 5" evidence="1">
    <location>
        <begin position="574"/>
        <end position="591"/>
    </location>
</feature>
<feature type="repeat" description="Hemolysin-type calcium-binding 6" evidence="1">
    <location>
        <begin position="696"/>
        <end position="711"/>
    </location>
</feature>
<feature type="repeat" description="Hemolysin-type calcium-binding 7" evidence="1">
    <location>
        <begin position="713"/>
        <end position="730"/>
    </location>
</feature>
<feature type="repeat" description="Hemolysin-type calcium-binding 8" evidence="1">
    <location>
        <begin position="828"/>
        <end position="839"/>
    </location>
</feature>
<feature type="repeat" description="Hemolysin-type calcium-binding 9" evidence="1">
    <location>
        <begin position="846"/>
        <end position="862"/>
    </location>
</feature>
<feature type="repeat" description="Hemolysin-type calcium-binding 10" evidence="1">
    <location>
        <begin position="864"/>
        <end position="880"/>
    </location>
</feature>
<name>ALGE2_AZOVI</name>
<protein>
    <recommendedName>
        <fullName evidence="4">Mannuronan C5-epimerase AlgE2</fullName>
        <ecNumber evidence="2">5.1.3.37</ecNumber>
    </recommendedName>
    <alternativeName>
        <fullName>Poly(beta-D-mannuronate) C5 epimerase 2</fullName>
    </alternativeName>
</protein>
<reference key="1">
    <citation type="journal article" date="1994" name="J. Bacteriol.">
        <title>Cloning and expression of an Azotobacter vinelandii mannuronan C-5-epimerase gene.</title>
        <authorList>
            <person name="Ertesvaag H."/>
            <person name="Doseth B."/>
            <person name="Larsen B."/>
            <person name="Skjaak-Braek G."/>
            <person name="Valla S."/>
        </authorList>
    </citation>
    <scope>NUCLEOTIDE SEQUENCE [GENOMIC DNA]</scope>
    <scope>PROTEIN SEQUENCE OF 1-15</scope>
    <scope>FUNCTION</scope>
    <scope>CATALYTIC ACTIVITY</scope>
    <source>
        <strain>E</strain>
    </source>
</reference>
<reference key="2">
    <citation type="journal article" date="1995" name="Mol. Microbiol.">
        <title>A family of modular type mannuronan C-5-epimerase genes controls alginate structure in Azotobacter vinelandii.</title>
        <authorList>
            <person name="Ertesvaag H."/>
            <person name="Hoeidal H.K."/>
            <person name="Hals I.K."/>
            <person name="Rian A."/>
            <person name="Doseth B."/>
            <person name="Valla S."/>
        </authorList>
    </citation>
    <scope>NUCLEOTIDE SEQUENCE [GENOMIC DNA]</scope>
    <source>
        <strain>E</strain>
    </source>
</reference>
<reference key="3">
    <citation type="journal article" date="2000" name="Environ. Microbiol.">
        <title>Mannuronan C-5 epimerases and cellular differentiation of Azotobacter vinelandii.</title>
        <authorList>
            <person name="Hoeidal H.K."/>
            <person name="Glaerum Svanem B.I."/>
            <person name="Gimmestad M."/>
            <person name="Valla S."/>
        </authorList>
    </citation>
    <scope>EXPRESSION</scope>
    <source>
        <strain>E</strain>
    </source>
</reference>
<reference key="4">
    <citation type="journal article" date="1999" name="Metab. Eng.">
        <title>Mannuronan C-5-epimerases and their application for in vitro and in vivo design of new alginates useful in biotechnology.</title>
        <authorList>
            <person name="Ertesvaag H."/>
            <person name="Hoeidal H.K."/>
            <person name="Schjerven H."/>
            <person name="Glaerum Svanem B.I."/>
            <person name="Valla S."/>
        </authorList>
    </citation>
    <scope>REVIEW</scope>
</reference>
<organism>
    <name type="scientific">Azotobacter vinelandii</name>
    <dbReference type="NCBI Taxonomy" id="354"/>
    <lineage>
        <taxon>Bacteria</taxon>
        <taxon>Pseudomonadati</taxon>
        <taxon>Pseudomonadota</taxon>
        <taxon>Gammaproteobacteria</taxon>
        <taxon>Pseudomonadales</taxon>
        <taxon>Pseudomonadaceae</taxon>
        <taxon>Azotobacter</taxon>
    </lineage>
</organism>
<dbReference type="EC" id="5.1.3.37" evidence="2"/>
<dbReference type="EMBL" id="L39096">
    <property type="protein sequence ID" value="AAA87312.1"/>
    <property type="molecule type" value="Genomic_DNA"/>
</dbReference>
<dbReference type="PIR" id="S77625">
    <property type="entry name" value="S77625"/>
</dbReference>
<dbReference type="SMR" id="Q44495"/>
<dbReference type="BRENDA" id="5.1.3.37">
    <property type="organism ID" value="49"/>
</dbReference>
<dbReference type="UniPathway" id="UPA00286"/>
<dbReference type="GO" id="GO:0005615">
    <property type="term" value="C:extracellular space"/>
    <property type="evidence" value="ECO:0007669"/>
    <property type="project" value="InterPro"/>
</dbReference>
<dbReference type="GO" id="GO:0005509">
    <property type="term" value="F:calcium ion binding"/>
    <property type="evidence" value="ECO:0007669"/>
    <property type="project" value="InterPro"/>
</dbReference>
<dbReference type="GO" id="GO:0016853">
    <property type="term" value="F:isomerase activity"/>
    <property type="evidence" value="ECO:0007669"/>
    <property type="project" value="UniProtKB-KW"/>
</dbReference>
<dbReference type="GO" id="GO:0042121">
    <property type="term" value="P:alginic acid biosynthetic process"/>
    <property type="evidence" value="ECO:0007669"/>
    <property type="project" value="UniProtKB-UniPathway"/>
</dbReference>
<dbReference type="Gene3D" id="2.150.10.10">
    <property type="entry name" value="Serralysin-like metalloprotease, C-terminal"/>
    <property type="match status" value="3"/>
</dbReference>
<dbReference type="Gene3D" id="2.160.20.10">
    <property type="entry name" value="Single-stranded right-handed beta-helix, Pectin lyase-like"/>
    <property type="match status" value="1"/>
</dbReference>
<dbReference type="InterPro" id="IPR039448">
    <property type="entry name" value="Beta_helix"/>
</dbReference>
<dbReference type="InterPro" id="IPR006633">
    <property type="entry name" value="Carb-bd_sugar_hydrolysis-dom"/>
</dbReference>
<dbReference type="InterPro" id="IPR018511">
    <property type="entry name" value="Hemolysin-typ_Ca-bd_CS"/>
</dbReference>
<dbReference type="InterPro" id="IPR001343">
    <property type="entry name" value="Hemolysn_Ca-bd"/>
</dbReference>
<dbReference type="InterPro" id="IPR006626">
    <property type="entry name" value="PbH1"/>
</dbReference>
<dbReference type="InterPro" id="IPR012334">
    <property type="entry name" value="Pectin_lyas_fold"/>
</dbReference>
<dbReference type="InterPro" id="IPR011050">
    <property type="entry name" value="Pectin_lyase_fold/virulence"/>
</dbReference>
<dbReference type="InterPro" id="IPR013858">
    <property type="entry name" value="Peptidase_M10B_C"/>
</dbReference>
<dbReference type="InterPro" id="IPR024535">
    <property type="entry name" value="RHGA/B-epi-like_pectate_lyase"/>
</dbReference>
<dbReference type="InterPro" id="IPR050557">
    <property type="entry name" value="RTX_toxin/Mannuronan_C5-epim"/>
</dbReference>
<dbReference type="InterPro" id="IPR011049">
    <property type="entry name" value="Serralysin-like_metalloprot_C"/>
</dbReference>
<dbReference type="PANTHER" id="PTHR38340">
    <property type="entry name" value="S-LAYER PROTEIN"/>
    <property type="match status" value="1"/>
</dbReference>
<dbReference type="PANTHER" id="PTHR38340:SF1">
    <property type="entry name" value="S-LAYER PROTEIN"/>
    <property type="match status" value="1"/>
</dbReference>
<dbReference type="Pfam" id="PF13229">
    <property type="entry name" value="Beta_helix"/>
    <property type="match status" value="1"/>
</dbReference>
<dbReference type="Pfam" id="PF00353">
    <property type="entry name" value="HemolysinCabind"/>
    <property type="match status" value="4"/>
</dbReference>
<dbReference type="Pfam" id="PF12708">
    <property type="entry name" value="Pect-lyase_RHGA_epim"/>
    <property type="match status" value="1"/>
</dbReference>
<dbReference type="Pfam" id="PF08548">
    <property type="entry name" value="Peptidase_M10_C"/>
    <property type="match status" value="4"/>
</dbReference>
<dbReference type="PRINTS" id="PR00313">
    <property type="entry name" value="CABNDNGRPT"/>
</dbReference>
<dbReference type="SMART" id="SM00722">
    <property type="entry name" value="CASH"/>
    <property type="match status" value="2"/>
</dbReference>
<dbReference type="SMART" id="SM00710">
    <property type="entry name" value="PbH1"/>
    <property type="match status" value="7"/>
</dbReference>
<dbReference type="SUPFAM" id="SSF51120">
    <property type="entry name" value="beta-Roll"/>
    <property type="match status" value="4"/>
</dbReference>
<dbReference type="SUPFAM" id="SSF51126">
    <property type="entry name" value="Pectin lyase-like"/>
    <property type="match status" value="1"/>
</dbReference>
<dbReference type="PROSITE" id="PS00330">
    <property type="entry name" value="HEMOLYSIN_CALCIUM"/>
    <property type="match status" value="6"/>
</dbReference>
<sequence>MDYNVKDFGALGDGVSDDTAAIQAAIDAAYAAGGGTVYLPAGEYRVSGGEEPSDGCLTIKSNVHIVGAGMGETVIKLVDGWDQDVTGIVRSAYGEETSNFGMSDLTLDGNRDNTSGKVDGWFNGYIPGEDGADRDVTLERVEIREMSGYGFDPHEQTINLTIRDSVAHDNGLDGFVADFQIGGVFENNVSYNNDRHGFNIVTSTNDFVLSNNVAYGNGGAGLVVQRGSSDVAHPYDILIDGGAYYDNGLEGVQIKMAHDVTLQNAEIYGNGLYGVRVYGAEDVQILDNYIHDNSQNGSYAEILLQSYDDTAGVSGNFYTTTGTWIEGNTIVGSANSTYGIQERDDGTDYSSLYANSVSNVQNGSVRLYGANSVVSDLPGTGQQATLEGTAGNDTLGGSDAHETLLGLDGNDRLNGGAGNDILDGGAGRDNLTGGAGADLFRVSARTDSYRTDSASFNDLITDFDASQDRIDLSALGFTGLGDGYNGTLLLQVSADGSRTYLKSLEADAEGRRFEIALDGNFAGLLGAGNLLFERTAIEGDAGDNALLGTSAAETLLGHAGNDTLDGGAGDDILVGGAGRDSLTGGAGADVFRFDALSDSQRNYDIGDNQGDRIADFAVGEDKLDVSALGFTGLGDGYNGTLALVLNSAGDRTYVKSYENGADGYRFEFSLDGNYLELLGNEDFIFATPSGQQLLEGSAGNDSLQGTAADEVIHGGGGRDTLAGGAGADVFRFSELTDSYRDSASYADLITDFDASEDRIDLSGLGFSGLGNGYGGTLALQVNSAGTRTYLKSFETNAAGERFEIALDGDLSALGGANLILDARTVLAGGDGNDTLSGSSAAEELLGGVGNDSLDGGAGNDILDGGAGRDTLSGGSGSDIFRFGGALDSFRNYASGTNGTDSITDFTPGEDLIDLSVLGYTGLGDGYNGTLAIVLNDAGTKTYLKNRESDAEGNQFEIALEGNHADQLDASDFIFATAAATTGIEVVGGSGTQTDQLA</sequence>
<evidence type="ECO:0000255" key="1"/>
<evidence type="ECO:0000269" key="2">
    <source>
    </source>
</evidence>
<evidence type="ECO:0000303" key="3">
    <source>
    </source>
</evidence>
<evidence type="ECO:0000305" key="4"/>
<accession>Q44495</accession>
<comment type="function">
    <text evidence="2">Converts beta-D-mannuronic acid (M) to alpha-L-guluronic acid (G), producing a polymer with gel-forming capacity, required for the formation of the cyst coat.</text>
</comment>
<comment type="catalytic activity">
    <reaction evidence="2">
        <text>[(1-&gt;4)-beta-D-mannuronosyl](n) = [alginate](n)</text>
        <dbReference type="Rhea" id="RHEA:45572"/>
        <dbReference type="Rhea" id="RHEA-COMP:11264"/>
        <dbReference type="Rhea" id="RHEA-COMP:11270"/>
        <dbReference type="ChEBI" id="CHEBI:58187"/>
        <dbReference type="ChEBI" id="CHEBI:85311"/>
        <dbReference type="EC" id="5.1.3.37"/>
    </reaction>
</comment>
<comment type="cofactor">
    <cofactor>
        <name>Ca(2+)</name>
        <dbReference type="ChEBI" id="CHEBI:29108"/>
    </cofactor>
</comment>
<comment type="activity regulation">
    <text>Inhibited by zinc.</text>
</comment>
<comment type="pathway">
    <text>Glycan biosynthesis; alginate biosynthesis.</text>
</comment>
<comment type="subcellular location">
    <subcellularLocation>
        <location>Secreted</location>
    </subcellularLocation>
    <text>Probably exported via the hemolysin-type secretion pathway.</text>
</comment>
<comment type="developmental stage">
    <text>Produced mainly in encysting cells.</text>
</comment>
<comment type="domain">
    <text>Composed of one catalytically active A module and four R modules.</text>
</comment>
<comment type="miscellaneous">
    <text>Each enzyme of this family of C5 epimerases introduces its own characteristic sequence distribution of G-blocks in their substrates, explaining the extensive sequence variability of alginates. These alginates of varying composition have different physical properties and are necessary at different stages of the bacterium life cycle.</text>
</comment>
<comment type="similarity">
    <text evidence="4">Belongs to the D-mannuronate C5-epimerase family.</text>
</comment>